<accession>Q9FMQ9</accession>
<proteinExistence type="inferred from homology"/>
<sequence>MEPNCVQFLENRTILVTGASGFLAKVLVERILRLQPNVKRLYLLVRASDKKSAEQRYDVALGINTFGAINVLNFAKKCVKPKLLLHVSTVYVCGERPGHIVEKHFAMGESLNGKNKVDINTERRLADQKSKQFKEQGCSEEETEQAMKDFGLKRARLYGWPNTYVFTKAMGEMLLGHYRETMPIVIIRPTIITSTFSDPFPGWIEGLKTVDSVIIFYGKGILKCFLVDQKTVCDIIPVDMVVNAMIAIAADHCHDSGSHTVYHVGSSNQNPVIYKQIYEMMSRYFMKSPLVGRNGMLIVPKVTRISTLARFRVYTNLRYKLPIQILGLLSVISLSQRDKFALHNRKFKMAMRLVKLYKPYVLFKGIFDDKNMETLRIKNEAKDMEKLFGTNPKCIDWEDYFMIRISLAS</sequence>
<protein>
    <recommendedName>
        <fullName evidence="1">Putative fatty acyl-CoA reductase 7</fullName>
    </recommendedName>
</protein>
<dbReference type="EMBL" id="AB007651">
    <property type="protein sequence ID" value="BAB08341.1"/>
    <property type="molecule type" value="Genomic_DNA"/>
</dbReference>
<dbReference type="EMBL" id="CP002688">
    <property type="protein sequence ID" value="AED93024.1"/>
    <property type="molecule type" value="Genomic_DNA"/>
</dbReference>
<dbReference type="RefSeq" id="NP_197634.1">
    <property type="nucleotide sequence ID" value="NM_122147.2"/>
</dbReference>
<dbReference type="SMR" id="Q9FMQ9"/>
<dbReference type="FunCoup" id="Q9FMQ9">
    <property type="interactions" value="86"/>
</dbReference>
<dbReference type="STRING" id="3702.Q9FMQ9"/>
<dbReference type="PaxDb" id="3702-AT5G22420.1"/>
<dbReference type="EnsemblPlants" id="AT5G22420.1">
    <property type="protein sequence ID" value="AT5G22420.1"/>
    <property type="gene ID" value="AT5G22420"/>
</dbReference>
<dbReference type="GeneID" id="832303"/>
<dbReference type="Gramene" id="AT5G22420.1">
    <property type="protein sequence ID" value="AT5G22420.1"/>
    <property type="gene ID" value="AT5G22420"/>
</dbReference>
<dbReference type="KEGG" id="ath:AT5G22420"/>
<dbReference type="Araport" id="AT5G22420"/>
<dbReference type="TAIR" id="AT5G22420">
    <property type="gene designation" value="FAR7"/>
</dbReference>
<dbReference type="eggNOG" id="KOG1221">
    <property type="taxonomic scope" value="Eukaryota"/>
</dbReference>
<dbReference type="HOGENOM" id="CLU_024661_4_0_1"/>
<dbReference type="InParanoid" id="Q9FMQ9"/>
<dbReference type="OMA" id="LLFTIWQ"/>
<dbReference type="PhylomeDB" id="Q9FMQ9"/>
<dbReference type="BioCyc" id="ARA:AT5G22420-MONOMER"/>
<dbReference type="PRO" id="PR:Q9FMQ9"/>
<dbReference type="Proteomes" id="UP000006548">
    <property type="component" value="Chromosome 5"/>
</dbReference>
<dbReference type="ExpressionAtlas" id="Q9FMQ9">
    <property type="expression patterns" value="baseline and differential"/>
</dbReference>
<dbReference type="GO" id="GO:0080019">
    <property type="term" value="F:alcohol-forming very long-chain fatty acyl-CoA reductase activity"/>
    <property type="evidence" value="ECO:0007669"/>
    <property type="project" value="InterPro"/>
</dbReference>
<dbReference type="GO" id="GO:0006629">
    <property type="term" value="P:lipid metabolic process"/>
    <property type="evidence" value="ECO:0007669"/>
    <property type="project" value="UniProtKB-KW"/>
</dbReference>
<dbReference type="CDD" id="cd05236">
    <property type="entry name" value="FAR-N_SDR_e"/>
    <property type="match status" value="1"/>
</dbReference>
<dbReference type="CDD" id="cd09071">
    <property type="entry name" value="FAR_C"/>
    <property type="match status" value="1"/>
</dbReference>
<dbReference type="Gene3D" id="3.40.50.720">
    <property type="entry name" value="NAD(P)-binding Rossmann-like Domain"/>
    <property type="match status" value="1"/>
</dbReference>
<dbReference type="InterPro" id="IPR026055">
    <property type="entry name" value="FAR"/>
</dbReference>
<dbReference type="InterPro" id="IPR033640">
    <property type="entry name" value="FAR_C"/>
</dbReference>
<dbReference type="InterPro" id="IPR013120">
    <property type="entry name" value="Far_NAD-bd"/>
</dbReference>
<dbReference type="InterPro" id="IPR036291">
    <property type="entry name" value="NAD(P)-bd_dom_sf"/>
</dbReference>
<dbReference type="PANTHER" id="PTHR11011:SF115">
    <property type="entry name" value="FATTY ACYL-COA REDUCTASE 7-RELATED"/>
    <property type="match status" value="1"/>
</dbReference>
<dbReference type="PANTHER" id="PTHR11011">
    <property type="entry name" value="MALE STERILITY PROTEIN 2-RELATED"/>
    <property type="match status" value="1"/>
</dbReference>
<dbReference type="Pfam" id="PF07993">
    <property type="entry name" value="NAD_binding_4"/>
    <property type="match status" value="1"/>
</dbReference>
<dbReference type="Pfam" id="PF03015">
    <property type="entry name" value="Sterile"/>
    <property type="match status" value="1"/>
</dbReference>
<dbReference type="SUPFAM" id="SSF51735">
    <property type="entry name" value="NAD(P)-binding Rossmann-fold domains"/>
    <property type="match status" value="1"/>
</dbReference>
<reference key="1">
    <citation type="journal article" date="1997" name="DNA Res.">
        <title>Structural analysis of Arabidopsis thaliana chromosome 5. III. Sequence features of the regions of 1,191,918 bp covered by seventeen physically assigned P1 clones.</title>
        <authorList>
            <person name="Nakamura Y."/>
            <person name="Sato S."/>
            <person name="Kaneko T."/>
            <person name="Kotani H."/>
            <person name="Asamizu E."/>
            <person name="Miyajima N."/>
            <person name="Tabata S."/>
        </authorList>
    </citation>
    <scope>NUCLEOTIDE SEQUENCE [LARGE SCALE GENOMIC DNA]</scope>
    <source>
        <strain>cv. Columbia</strain>
    </source>
</reference>
<reference key="2">
    <citation type="journal article" date="2017" name="Plant J.">
        <title>Araport11: a complete reannotation of the Arabidopsis thaliana reference genome.</title>
        <authorList>
            <person name="Cheng C.Y."/>
            <person name="Krishnakumar V."/>
            <person name="Chan A.P."/>
            <person name="Thibaud-Nissen F."/>
            <person name="Schobel S."/>
            <person name="Town C.D."/>
        </authorList>
    </citation>
    <scope>GENOME REANNOTATION</scope>
    <source>
        <strain>cv. Columbia</strain>
    </source>
</reference>
<organism>
    <name type="scientific">Arabidopsis thaliana</name>
    <name type="common">Mouse-ear cress</name>
    <dbReference type="NCBI Taxonomy" id="3702"/>
    <lineage>
        <taxon>Eukaryota</taxon>
        <taxon>Viridiplantae</taxon>
        <taxon>Streptophyta</taxon>
        <taxon>Embryophyta</taxon>
        <taxon>Tracheophyta</taxon>
        <taxon>Spermatophyta</taxon>
        <taxon>Magnoliopsida</taxon>
        <taxon>eudicotyledons</taxon>
        <taxon>Gunneridae</taxon>
        <taxon>Pentapetalae</taxon>
        <taxon>rosids</taxon>
        <taxon>malvids</taxon>
        <taxon>Brassicales</taxon>
        <taxon>Brassicaceae</taxon>
        <taxon>Camelineae</taxon>
        <taxon>Arabidopsis</taxon>
    </lineage>
</organism>
<comment type="similarity">
    <text evidence="1">Belongs to the fatty acyl-CoA reductase family.</text>
</comment>
<gene>
    <name type="primary">FAR7</name>
    <name type="ordered locus">At5g22420</name>
    <name type="ORF">MWD9.22</name>
</gene>
<keyword id="KW-0444">Lipid biosynthesis</keyword>
<keyword id="KW-0443">Lipid metabolism</keyword>
<keyword id="KW-1185">Reference proteome</keyword>
<feature type="chain" id="PRO_0000378347" description="Putative fatty acyl-CoA reductase 7">
    <location>
        <begin position="1"/>
        <end position="409"/>
    </location>
</feature>
<evidence type="ECO:0000305" key="1"/>
<name>FACR7_ARATH</name>